<name>NADD_SHEPA</name>
<gene>
    <name evidence="1" type="primary">nadD</name>
    <name type="ordered locus">Spea_3146</name>
</gene>
<reference key="1">
    <citation type="submission" date="2007-10" db="EMBL/GenBank/DDBJ databases">
        <title>Complete sequence of Shewanella pealeana ATCC 700345.</title>
        <authorList>
            <consortium name="US DOE Joint Genome Institute"/>
            <person name="Copeland A."/>
            <person name="Lucas S."/>
            <person name="Lapidus A."/>
            <person name="Barry K."/>
            <person name="Glavina del Rio T."/>
            <person name="Dalin E."/>
            <person name="Tice H."/>
            <person name="Pitluck S."/>
            <person name="Chertkov O."/>
            <person name="Brettin T."/>
            <person name="Bruce D."/>
            <person name="Detter J.C."/>
            <person name="Han C."/>
            <person name="Schmutz J."/>
            <person name="Larimer F."/>
            <person name="Land M."/>
            <person name="Hauser L."/>
            <person name="Kyrpides N."/>
            <person name="Kim E."/>
            <person name="Zhao J.-S.Z."/>
            <person name="Manno D."/>
            <person name="Hawari J."/>
            <person name="Richardson P."/>
        </authorList>
    </citation>
    <scope>NUCLEOTIDE SEQUENCE [LARGE SCALE GENOMIC DNA]</scope>
    <source>
        <strain>ATCC 700345 / ANG-SQ1</strain>
    </source>
</reference>
<accession>A8H7C5</accession>
<dbReference type="EC" id="2.7.7.18" evidence="1"/>
<dbReference type="EMBL" id="CP000851">
    <property type="protein sequence ID" value="ABV88462.1"/>
    <property type="molecule type" value="Genomic_DNA"/>
</dbReference>
<dbReference type="RefSeq" id="WP_012156364.1">
    <property type="nucleotide sequence ID" value="NC_009901.1"/>
</dbReference>
<dbReference type="SMR" id="A8H7C5"/>
<dbReference type="STRING" id="398579.Spea_3146"/>
<dbReference type="KEGG" id="spl:Spea_3146"/>
<dbReference type="eggNOG" id="COG1057">
    <property type="taxonomic scope" value="Bacteria"/>
</dbReference>
<dbReference type="HOGENOM" id="CLU_069765_0_0_6"/>
<dbReference type="OrthoDB" id="5295945at2"/>
<dbReference type="UniPathway" id="UPA00253">
    <property type="reaction ID" value="UER00332"/>
</dbReference>
<dbReference type="Proteomes" id="UP000002608">
    <property type="component" value="Chromosome"/>
</dbReference>
<dbReference type="GO" id="GO:0005524">
    <property type="term" value="F:ATP binding"/>
    <property type="evidence" value="ECO:0007669"/>
    <property type="project" value="UniProtKB-KW"/>
</dbReference>
<dbReference type="GO" id="GO:0004515">
    <property type="term" value="F:nicotinate-nucleotide adenylyltransferase activity"/>
    <property type="evidence" value="ECO:0007669"/>
    <property type="project" value="UniProtKB-UniRule"/>
</dbReference>
<dbReference type="GO" id="GO:0009435">
    <property type="term" value="P:NAD biosynthetic process"/>
    <property type="evidence" value="ECO:0007669"/>
    <property type="project" value="UniProtKB-UniRule"/>
</dbReference>
<dbReference type="CDD" id="cd02165">
    <property type="entry name" value="NMNAT"/>
    <property type="match status" value="1"/>
</dbReference>
<dbReference type="FunFam" id="3.40.50.620:FF:000039">
    <property type="entry name" value="Probable nicotinate-nucleotide adenylyltransferase"/>
    <property type="match status" value="1"/>
</dbReference>
<dbReference type="Gene3D" id="3.40.50.620">
    <property type="entry name" value="HUPs"/>
    <property type="match status" value="1"/>
</dbReference>
<dbReference type="HAMAP" id="MF_00244">
    <property type="entry name" value="NaMN_adenylyltr"/>
    <property type="match status" value="1"/>
</dbReference>
<dbReference type="InterPro" id="IPR004821">
    <property type="entry name" value="Cyt_trans-like"/>
</dbReference>
<dbReference type="InterPro" id="IPR005248">
    <property type="entry name" value="NadD/NMNAT"/>
</dbReference>
<dbReference type="InterPro" id="IPR014729">
    <property type="entry name" value="Rossmann-like_a/b/a_fold"/>
</dbReference>
<dbReference type="NCBIfam" id="TIGR00125">
    <property type="entry name" value="cyt_tran_rel"/>
    <property type="match status" value="1"/>
</dbReference>
<dbReference type="NCBIfam" id="TIGR00482">
    <property type="entry name" value="nicotinate (nicotinamide) nucleotide adenylyltransferase"/>
    <property type="match status" value="1"/>
</dbReference>
<dbReference type="NCBIfam" id="NF000839">
    <property type="entry name" value="PRK00071.1-1"/>
    <property type="match status" value="1"/>
</dbReference>
<dbReference type="NCBIfam" id="NF000840">
    <property type="entry name" value="PRK00071.1-3"/>
    <property type="match status" value="1"/>
</dbReference>
<dbReference type="PANTHER" id="PTHR39321">
    <property type="entry name" value="NICOTINATE-NUCLEOTIDE ADENYLYLTRANSFERASE-RELATED"/>
    <property type="match status" value="1"/>
</dbReference>
<dbReference type="PANTHER" id="PTHR39321:SF3">
    <property type="entry name" value="PHOSPHOPANTETHEINE ADENYLYLTRANSFERASE"/>
    <property type="match status" value="1"/>
</dbReference>
<dbReference type="Pfam" id="PF01467">
    <property type="entry name" value="CTP_transf_like"/>
    <property type="match status" value="1"/>
</dbReference>
<dbReference type="SUPFAM" id="SSF52374">
    <property type="entry name" value="Nucleotidylyl transferase"/>
    <property type="match status" value="1"/>
</dbReference>
<evidence type="ECO:0000255" key="1">
    <source>
        <dbReference type="HAMAP-Rule" id="MF_00244"/>
    </source>
</evidence>
<feature type="chain" id="PRO_1000078391" description="Probable nicotinate-nucleotide adenylyltransferase">
    <location>
        <begin position="1"/>
        <end position="216"/>
    </location>
</feature>
<sequence>MKIGILGGTFDPIHFGHIRPAQEVKQQLKLDEVWLMPNHIPPHKQGTHVSSQARLAMAELIADEFPCFKVCDIEAKRDTPSYSAMTLTQLTKIYPQHEFYFIMGMDSFLSFTRWHEWQQLFGLCHLVVCKRPGWLLDDKDPMQKILTPRLHDVARPLPAKSGKIFMVDITQQDISSTQVRQQLMQGIMPSAVLPTSIQEYIRHNRLYRGDSSTKTD</sequence>
<protein>
    <recommendedName>
        <fullName evidence="1">Probable nicotinate-nucleotide adenylyltransferase</fullName>
        <ecNumber evidence="1">2.7.7.18</ecNumber>
    </recommendedName>
    <alternativeName>
        <fullName evidence="1">Deamido-NAD(+) diphosphorylase</fullName>
    </alternativeName>
    <alternativeName>
        <fullName evidence="1">Deamido-NAD(+) pyrophosphorylase</fullName>
    </alternativeName>
    <alternativeName>
        <fullName evidence="1">Nicotinate mononucleotide adenylyltransferase</fullName>
        <shortName evidence="1">NaMN adenylyltransferase</shortName>
    </alternativeName>
</protein>
<comment type="function">
    <text evidence="1">Catalyzes the reversible adenylation of nicotinate mononucleotide (NaMN) to nicotinic acid adenine dinucleotide (NaAD).</text>
</comment>
<comment type="catalytic activity">
    <reaction evidence="1">
        <text>nicotinate beta-D-ribonucleotide + ATP + H(+) = deamido-NAD(+) + diphosphate</text>
        <dbReference type="Rhea" id="RHEA:22860"/>
        <dbReference type="ChEBI" id="CHEBI:15378"/>
        <dbReference type="ChEBI" id="CHEBI:30616"/>
        <dbReference type="ChEBI" id="CHEBI:33019"/>
        <dbReference type="ChEBI" id="CHEBI:57502"/>
        <dbReference type="ChEBI" id="CHEBI:58437"/>
        <dbReference type="EC" id="2.7.7.18"/>
    </reaction>
</comment>
<comment type="pathway">
    <text evidence="1">Cofactor biosynthesis; NAD(+) biosynthesis; deamido-NAD(+) from nicotinate D-ribonucleotide: step 1/1.</text>
</comment>
<comment type="similarity">
    <text evidence="1">Belongs to the NadD family.</text>
</comment>
<keyword id="KW-0067">ATP-binding</keyword>
<keyword id="KW-0520">NAD</keyword>
<keyword id="KW-0547">Nucleotide-binding</keyword>
<keyword id="KW-0548">Nucleotidyltransferase</keyword>
<keyword id="KW-0662">Pyridine nucleotide biosynthesis</keyword>
<keyword id="KW-1185">Reference proteome</keyword>
<keyword id="KW-0808">Transferase</keyword>
<organism>
    <name type="scientific">Shewanella pealeana (strain ATCC 700345 / ANG-SQ1)</name>
    <dbReference type="NCBI Taxonomy" id="398579"/>
    <lineage>
        <taxon>Bacteria</taxon>
        <taxon>Pseudomonadati</taxon>
        <taxon>Pseudomonadota</taxon>
        <taxon>Gammaproteobacteria</taxon>
        <taxon>Alteromonadales</taxon>
        <taxon>Shewanellaceae</taxon>
        <taxon>Shewanella</taxon>
    </lineage>
</organism>
<proteinExistence type="inferred from homology"/>